<gene>
    <name evidence="1" type="primary">secY</name>
</gene>
<dbReference type="EMBL" id="X17524">
    <property type="protein sequence ID" value="CAA35567.1"/>
    <property type="molecule type" value="Genomic_DNA"/>
</dbReference>
<dbReference type="PIR" id="S29891">
    <property type="entry name" value="S29891"/>
</dbReference>
<dbReference type="SMR" id="P33108"/>
<dbReference type="STRING" id="1232675.GCA_000309825_02138"/>
<dbReference type="GO" id="GO:0005886">
    <property type="term" value="C:plasma membrane"/>
    <property type="evidence" value="ECO:0007669"/>
    <property type="project" value="UniProtKB-SubCell"/>
</dbReference>
<dbReference type="GO" id="GO:0065002">
    <property type="term" value="P:intracellular protein transmembrane transport"/>
    <property type="evidence" value="ECO:0007669"/>
    <property type="project" value="UniProtKB-UniRule"/>
</dbReference>
<dbReference type="GO" id="GO:0006605">
    <property type="term" value="P:protein targeting"/>
    <property type="evidence" value="ECO:0007669"/>
    <property type="project" value="UniProtKB-UniRule"/>
</dbReference>
<dbReference type="GO" id="GO:0043952">
    <property type="term" value="P:protein transport by the Sec complex"/>
    <property type="evidence" value="ECO:0007669"/>
    <property type="project" value="UniProtKB-UniRule"/>
</dbReference>
<dbReference type="FunFam" id="1.10.3370.10:FF:000001">
    <property type="entry name" value="Preprotein translocase subunit SecY"/>
    <property type="match status" value="1"/>
</dbReference>
<dbReference type="Gene3D" id="1.10.3370.10">
    <property type="entry name" value="SecY subunit domain"/>
    <property type="match status" value="1"/>
</dbReference>
<dbReference type="HAMAP" id="MF_01465">
    <property type="entry name" value="SecY"/>
    <property type="match status" value="1"/>
</dbReference>
<dbReference type="InterPro" id="IPR026593">
    <property type="entry name" value="SecY"/>
</dbReference>
<dbReference type="InterPro" id="IPR002208">
    <property type="entry name" value="SecY/SEC61-alpha"/>
</dbReference>
<dbReference type="InterPro" id="IPR030659">
    <property type="entry name" value="SecY_CS"/>
</dbReference>
<dbReference type="InterPro" id="IPR023201">
    <property type="entry name" value="SecY_dom_sf"/>
</dbReference>
<dbReference type="NCBIfam" id="TIGR00967">
    <property type="entry name" value="3a0501s007"/>
    <property type="match status" value="1"/>
</dbReference>
<dbReference type="PANTHER" id="PTHR10906">
    <property type="entry name" value="SECY/SEC61-ALPHA FAMILY MEMBER"/>
    <property type="match status" value="1"/>
</dbReference>
<dbReference type="Pfam" id="PF00344">
    <property type="entry name" value="SecY"/>
    <property type="match status" value="1"/>
</dbReference>
<dbReference type="PIRSF" id="PIRSF004557">
    <property type="entry name" value="SecY"/>
    <property type="match status" value="1"/>
</dbReference>
<dbReference type="PRINTS" id="PR00303">
    <property type="entry name" value="SECYTRNLCASE"/>
</dbReference>
<dbReference type="SUPFAM" id="SSF103491">
    <property type="entry name" value="Preprotein translocase SecY subunit"/>
    <property type="match status" value="1"/>
</dbReference>
<dbReference type="PROSITE" id="PS00755">
    <property type="entry name" value="SECY_1"/>
    <property type="match status" value="1"/>
</dbReference>
<dbReference type="PROSITE" id="PS00756">
    <property type="entry name" value="SECY_2"/>
    <property type="match status" value="1"/>
</dbReference>
<feature type="chain" id="PRO_0000131729" description="Protein translocase subunit SecY">
    <location>
        <begin position="1"/>
        <end position="436"/>
    </location>
</feature>
<feature type="transmembrane region" description="Helical" evidence="1">
    <location>
        <begin position="18"/>
        <end position="38"/>
    </location>
</feature>
<feature type="transmembrane region" description="Helical" evidence="1">
    <location>
        <begin position="69"/>
        <end position="89"/>
    </location>
</feature>
<feature type="transmembrane region" description="Helical" evidence="1">
    <location>
        <begin position="116"/>
        <end position="138"/>
    </location>
</feature>
<feature type="transmembrane region" description="Helical" evidence="1">
    <location>
        <begin position="154"/>
        <end position="174"/>
    </location>
</feature>
<feature type="transmembrane region" description="Helical" evidence="1">
    <location>
        <begin position="187"/>
        <end position="207"/>
    </location>
</feature>
<feature type="transmembrane region" description="Helical" evidence="1">
    <location>
        <begin position="214"/>
        <end position="234"/>
    </location>
</feature>
<feature type="transmembrane region" description="Helical" evidence="1">
    <location>
        <begin position="266"/>
        <end position="286"/>
    </location>
</feature>
<feature type="transmembrane region" description="Helical" evidence="1">
    <location>
        <begin position="314"/>
        <end position="334"/>
    </location>
</feature>
<feature type="transmembrane region" description="Helical" evidence="1">
    <location>
        <begin position="375"/>
        <end position="395"/>
    </location>
</feature>
<feature type="transmembrane region" description="Helical" evidence="1">
    <location>
        <begin position="396"/>
        <end position="416"/>
    </location>
</feature>
<keyword id="KW-1003">Cell membrane</keyword>
<keyword id="KW-0472">Membrane</keyword>
<keyword id="KW-0653">Protein transport</keyword>
<keyword id="KW-0811">Translocation</keyword>
<keyword id="KW-0812">Transmembrane</keyword>
<keyword id="KW-1133">Transmembrane helix</keyword>
<keyword id="KW-0813">Transport</keyword>
<reference key="1">
    <citation type="journal article" date="1989" name="J. Mol. Evol.">
        <title>Spectinomycin operon of Micrococcus luteus: evolutionary implications of organization and novel codon usage.</title>
        <authorList>
            <person name="Ohama T."/>
            <person name="Muto A."/>
            <person name="Osawa S."/>
        </authorList>
    </citation>
    <scope>NUCLEOTIDE SEQUENCE [GENOMIC DNA]</scope>
</reference>
<sequence length="436" mass="47324">MLKAIARIVRTPDLLRKIAFTLGLIAVYRMGDFVPATGVDYPAVQQCLAAGNAQGGLYSFVNMFSGGALLQVSVFALGIMPYITASIIVQLLRVVIPRFEQLHQERRRGQATLTQYTRYLTLALALLQATTMASLARTGALLGCSLPLLRDGSILTVLLVVIALTTGCLIVMWFGERITENGVGNGMSLLIFTSIAAGFPAGLGQVVQTQGWRVFAIVMGIGLLTMLAIVFVEESQRRIPVQYAKRQIGSRTVGGSSTYIPVKVNMANVIPVIFASSVLMLPGILIQFNTPQDGSAPAPWITWLSRYFGSGDHPVYMALYFLLIIGFTYFYVSITFNPVEISDNMKRYGGFIPASAPAGPTERYLQYVISRITFVVGALYLGIVAMIPLIAFAVIGTSQNFPLGGTSILIMVGVGLQTVKQVSAQMEQRHYEGLLR</sequence>
<organism>
    <name type="scientific">Micrococcus luteus</name>
    <name type="common">Micrococcus lysodeikticus</name>
    <dbReference type="NCBI Taxonomy" id="1270"/>
    <lineage>
        <taxon>Bacteria</taxon>
        <taxon>Bacillati</taxon>
        <taxon>Actinomycetota</taxon>
        <taxon>Actinomycetes</taxon>
        <taxon>Micrococcales</taxon>
        <taxon>Micrococcaceae</taxon>
        <taxon>Micrococcus</taxon>
    </lineage>
</organism>
<evidence type="ECO:0000255" key="1">
    <source>
        <dbReference type="HAMAP-Rule" id="MF_01465"/>
    </source>
</evidence>
<proteinExistence type="inferred from homology"/>
<accession>P33108</accession>
<comment type="function">
    <text evidence="1">The central subunit of the protein translocation channel SecYEG. Consists of two halves formed by TMs 1-5 and 6-10. These two domains form a lateral gate at the front which open onto the bilayer between TMs 2 and 7, and are clamped together by SecE at the back. The channel is closed by both a pore ring composed of hydrophobic SecY resides and a short helix (helix 2A) on the extracellular side of the membrane which forms a plug. The plug probably moves laterally to allow the channel to open. The ring and the pore may move independently.</text>
</comment>
<comment type="subunit">
    <text evidence="1">Component of the Sec protein translocase complex. Heterotrimer consisting of SecY, SecE and SecG subunits. The heterotrimers can form oligomers, although 1 heterotrimer is thought to be able to translocate proteins. Interacts with the ribosome. Interacts with SecDF, and other proteins may be involved. Interacts with SecA.</text>
</comment>
<comment type="subcellular location">
    <subcellularLocation>
        <location evidence="1">Cell membrane</location>
        <topology evidence="1">Multi-pass membrane protein</topology>
    </subcellularLocation>
</comment>
<comment type="similarity">
    <text evidence="1">Belongs to the SecY/SEC61-alpha family.</text>
</comment>
<protein>
    <recommendedName>
        <fullName evidence="1">Protein translocase subunit SecY</fullName>
    </recommendedName>
</protein>
<name>SECY_MICLU</name>